<reference key="1">
    <citation type="journal article" date="2009" name="Environ. Microbiol.">
        <title>The genome of Polaromonas naphthalenivorans strain CJ2, isolated from coal tar-contaminated sediment, reveals physiological and metabolic versatility and evolution through extensive horizontal gene transfer.</title>
        <authorList>
            <person name="Yagi J.M."/>
            <person name="Sims D."/>
            <person name="Brettin T."/>
            <person name="Bruce D."/>
            <person name="Madsen E.L."/>
        </authorList>
    </citation>
    <scope>NUCLEOTIDE SEQUENCE [LARGE SCALE GENOMIC DNA]</scope>
    <source>
        <strain>CJ2</strain>
    </source>
</reference>
<name>ATPG_POLNA</name>
<protein>
    <recommendedName>
        <fullName evidence="1">ATP synthase gamma chain</fullName>
    </recommendedName>
    <alternativeName>
        <fullName evidence="1">ATP synthase F1 sector gamma subunit</fullName>
    </alternativeName>
    <alternativeName>
        <fullName evidence="1">F-ATPase gamma subunit</fullName>
    </alternativeName>
</protein>
<organism>
    <name type="scientific">Polaromonas naphthalenivorans (strain CJ2)</name>
    <dbReference type="NCBI Taxonomy" id="365044"/>
    <lineage>
        <taxon>Bacteria</taxon>
        <taxon>Pseudomonadati</taxon>
        <taxon>Pseudomonadota</taxon>
        <taxon>Betaproteobacteria</taxon>
        <taxon>Burkholderiales</taxon>
        <taxon>Comamonadaceae</taxon>
        <taxon>Polaromonas</taxon>
    </lineage>
</organism>
<sequence length="288" mass="31558">MAAGKEIRGKIKSVENTRKITKAMEMVAASKMRKAQERMRAARPYSDKIRNIAAHLSQANPEYTHPFMESNDAKTTGFIVVTTDKGLCGGLNTNVLRLLTTKLKDMQAAGEDAQAVAIGNKGLGFLNRIGVKVAAHATQLGDKPHLDKLIGPVKVLLDAYSEGKIKAVYLCYTRFINTMKQESVVEQLLPLTADRMQPDKTEHSWDYIYEPDAQTVIDELLVRYVEALVFQAVAENMASEQSARMVAMKSATDNAGSVIGELKLIYNKTRQAAITKELSEIVAGAAAV</sequence>
<gene>
    <name evidence="1" type="primary">atpG</name>
    <name type="ordered locus">Pnap_0254</name>
</gene>
<comment type="function">
    <text evidence="1">Produces ATP from ADP in the presence of a proton gradient across the membrane. The gamma chain is believed to be important in regulating ATPase activity and the flow of protons through the CF(0) complex.</text>
</comment>
<comment type="subunit">
    <text evidence="1">F-type ATPases have 2 components, CF(1) - the catalytic core - and CF(0) - the membrane proton channel. CF(1) has five subunits: alpha(3), beta(3), gamma(1), delta(1), epsilon(1). CF(0) has three main subunits: a, b and c.</text>
</comment>
<comment type="subcellular location">
    <subcellularLocation>
        <location evidence="1">Cell inner membrane</location>
        <topology evidence="1">Peripheral membrane protein</topology>
    </subcellularLocation>
</comment>
<comment type="similarity">
    <text evidence="1">Belongs to the ATPase gamma chain family.</text>
</comment>
<feature type="chain" id="PRO_1000053280" description="ATP synthase gamma chain">
    <location>
        <begin position="1"/>
        <end position="288"/>
    </location>
</feature>
<keyword id="KW-0066">ATP synthesis</keyword>
<keyword id="KW-0997">Cell inner membrane</keyword>
<keyword id="KW-1003">Cell membrane</keyword>
<keyword id="KW-0139">CF(1)</keyword>
<keyword id="KW-0375">Hydrogen ion transport</keyword>
<keyword id="KW-0406">Ion transport</keyword>
<keyword id="KW-0472">Membrane</keyword>
<keyword id="KW-1185">Reference proteome</keyword>
<keyword id="KW-0813">Transport</keyword>
<proteinExistence type="inferred from homology"/>
<accession>A1VIV1</accession>
<dbReference type="EMBL" id="CP000529">
    <property type="protein sequence ID" value="ABM35579.1"/>
    <property type="molecule type" value="Genomic_DNA"/>
</dbReference>
<dbReference type="RefSeq" id="WP_011799687.1">
    <property type="nucleotide sequence ID" value="NC_008781.1"/>
</dbReference>
<dbReference type="SMR" id="A1VIV1"/>
<dbReference type="STRING" id="365044.Pnap_0254"/>
<dbReference type="KEGG" id="pna:Pnap_0254"/>
<dbReference type="eggNOG" id="COG0224">
    <property type="taxonomic scope" value="Bacteria"/>
</dbReference>
<dbReference type="HOGENOM" id="CLU_050669_0_1_4"/>
<dbReference type="OrthoDB" id="9812769at2"/>
<dbReference type="Proteomes" id="UP000000644">
    <property type="component" value="Chromosome"/>
</dbReference>
<dbReference type="GO" id="GO:0005886">
    <property type="term" value="C:plasma membrane"/>
    <property type="evidence" value="ECO:0007669"/>
    <property type="project" value="UniProtKB-SubCell"/>
</dbReference>
<dbReference type="GO" id="GO:0045259">
    <property type="term" value="C:proton-transporting ATP synthase complex"/>
    <property type="evidence" value="ECO:0007669"/>
    <property type="project" value="UniProtKB-KW"/>
</dbReference>
<dbReference type="GO" id="GO:0005524">
    <property type="term" value="F:ATP binding"/>
    <property type="evidence" value="ECO:0007669"/>
    <property type="project" value="UniProtKB-UniRule"/>
</dbReference>
<dbReference type="GO" id="GO:0046933">
    <property type="term" value="F:proton-transporting ATP synthase activity, rotational mechanism"/>
    <property type="evidence" value="ECO:0007669"/>
    <property type="project" value="UniProtKB-UniRule"/>
</dbReference>
<dbReference type="GO" id="GO:0042777">
    <property type="term" value="P:proton motive force-driven plasma membrane ATP synthesis"/>
    <property type="evidence" value="ECO:0007669"/>
    <property type="project" value="UniProtKB-UniRule"/>
</dbReference>
<dbReference type="CDD" id="cd12151">
    <property type="entry name" value="F1-ATPase_gamma"/>
    <property type="match status" value="1"/>
</dbReference>
<dbReference type="FunFam" id="1.10.287.80:FF:000005">
    <property type="entry name" value="ATP synthase gamma chain"/>
    <property type="match status" value="1"/>
</dbReference>
<dbReference type="Gene3D" id="3.40.1380.10">
    <property type="match status" value="1"/>
</dbReference>
<dbReference type="Gene3D" id="1.10.287.80">
    <property type="entry name" value="ATP synthase, gamma subunit, helix hairpin domain"/>
    <property type="match status" value="1"/>
</dbReference>
<dbReference type="HAMAP" id="MF_00815">
    <property type="entry name" value="ATP_synth_gamma_bact"/>
    <property type="match status" value="1"/>
</dbReference>
<dbReference type="InterPro" id="IPR035968">
    <property type="entry name" value="ATP_synth_F1_ATPase_gsu"/>
</dbReference>
<dbReference type="InterPro" id="IPR000131">
    <property type="entry name" value="ATP_synth_F1_gsu"/>
</dbReference>
<dbReference type="InterPro" id="IPR023632">
    <property type="entry name" value="ATP_synth_F1_gsu_CS"/>
</dbReference>
<dbReference type="NCBIfam" id="TIGR01146">
    <property type="entry name" value="ATPsyn_F1gamma"/>
    <property type="match status" value="1"/>
</dbReference>
<dbReference type="NCBIfam" id="NF004144">
    <property type="entry name" value="PRK05621.1-1"/>
    <property type="match status" value="1"/>
</dbReference>
<dbReference type="PANTHER" id="PTHR11693">
    <property type="entry name" value="ATP SYNTHASE GAMMA CHAIN"/>
    <property type="match status" value="1"/>
</dbReference>
<dbReference type="PANTHER" id="PTHR11693:SF22">
    <property type="entry name" value="ATP SYNTHASE SUBUNIT GAMMA, MITOCHONDRIAL"/>
    <property type="match status" value="1"/>
</dbReference>
<dbReference type="Pfam" id="PF00231">
    <property type="entry name" value="ATP-synt"/>
    <property type="match status" value="1"/>
</dbReference>
<dbReference type="PRINTS" id="PR00126">
    <property type="entry name" value="ATPASEGAMMA"/>
</dbReference>
<dbReference type="SUPFAM" id="SSF52943">
    <property type="entry name" value="ATP synthase (F1-ATPase), gamma subunit"/>
    <property type="match status" value="1"/>
</dbReference>
<dbReference type="PROSITE" id="PS00153">
    <property type="entry name" value="ATPASE_GAMMA"/>
    <property type="match status" value="1"/>
</dbReference>
<evidence type="ECO:0000255" key="1">
    <source>
        <dbReference type="HAMAP-Rule" id="MF_00815"/>
    </source>
</evidence>